<dbReference type="EMBL" id="CP000468">
    <property type="protein sequence ID" value="ABJ03447.1"/>
    <property type="molecule type" value="Genomic_DNA"/>
</dbReference>
<dbReference type="RefSeq" id="WP_001207201.1">
    <property type="nucleotide sequence ID" value="NZ_CADILS010000053.1"/>
</dbReference>
<dbReference type="SMR" id="A1AIF7"/>
<dbReference type="GeneID" id="93777909"/>
<dbReference type="KEGG" id="ecv:APECO1_2488"/>
<dbReference type="HOGENOM" id="CLU_092227_0_2_6"/>
<dbReference type="Proteomes" id="UP000008216">
    <property type="component" value="Chromosome"/>
</dbReference>
<dbReference type="GO" id="GO:0015934">
    <property type="term" value="C:large ribosomal subunit"/>
    <property type="evidence" value="ECO:0007669"/>
    <property type="project" value="InterPro"/>
</dbReference>
<dbReference type="GO" id="GO:0070180">
    <property type="term" value="F:large ribosomal subunit rRNA binding"/>
    <property type="evidence" value="ECO:0007669"/>
    <property type="project" value="UniProtKB-UniRule"/>
</dbReference>
<dbReference type="GO" id="GO:0003735">
    <property type="term" value="F:structural constituent of ribosome"/>
    <property type="evidence" value="ECO:0007669"/>
    <property type="project" value="InterPro"/>
</dbReference>
<dbReference type="GO" id="GO:0006412">
    <property type="term" value="P:translation"/>
    <property type="evidence" value="ECO:0007669"/>
    <property type="project" value="UniProtKB-UniRule"/>
</dbReference>
<dbReference type="CDD" id="cd05797">
    <property type="entry name" value="Ribosomal_L10"/>
    <property type="match status" value="1"/>
</dbReference>
<dbReference type="FunFam" id="3.30.70.1730:FF:000001">
    <property type="entry name" value="50S ribosomal protein L10"/>
    <property type="match status" value="1"/>
</dbReference>
<dbReference type="Gene3D" id="3.30.70.1730">
    <property type="match status" value="1"/>
</dbReference>
<dbReference type="Gene3D" id="6.10.250.2350">
    <property type="match status" value="1"/>
</dbReference>
<dbReference type="HAMAP" id="MF_00362">
    <property type="entry name" value="Ribosomal_uL10"/>
    <property type="match status" value="1"/>
</dbReference>
<dbReference type="InterPro" id="IPR001790">
    <property type="entry name" value="Ribosomal_uL10"/>
</dbReference>
<dbReference type="InterPro" id="IPR043141">
    <property type="entry name" value="Ribosomal_uL10-like_sf"/>
</dbReference>
<dbReference type="InterPro" id="IPR022973">
    <property type="entry name" value="Ribosomal_uL10_bac"/>
</dbReference>
<dbReference type="InterPro" id="IPR047865">
    <property type="entry name" value="Ribosomal_uL10_bac_type"/>
</dbReference>
<dbReference type="InterPro" id="IPR002363">
    <property type="entry name" value="Ribosomal_uL10_CS_bac"/>
</dbReference>
<dbReference type="NCBIfam" id="NF000955">
    <property type="entry name" value="PRK00099.1-1"/>
    <property type="match status" value="1"/>
</dbReference>
<dbReference type="PANTHER" id="PTHR11560">
    <property type="entry name" value="39S RIBOSOMAL PROTEIN L10, MITOCHONDRIAL"/>
    <property type="match status" value="1"/>
</dbReference>
<dbReference type="Pfam" id="PF00466">
    <property type="entry name" value="Ribosomal_L10"/>
    <property type="match status" value="1"/>
</dbReference>
<dbReference type="SUPFAM" id="SSF160369">
    <property type="entry name" value="Ribosomal protein L10-like"/>
    <property type="match status" value="1"/>
</dbReference>
<dbReference type="PROSITE" id="PS01109">
    <property type="entry name" value="RIBOSOMAL_L10"/>
    <property type="match status" value="1"/>
</dbReference>
<proteinExistence type="inferred from homology"/>
<reference key="1">
    <citation type="journal article" date="2007" name="J. Bacteriol.">
        <title>The genome sequence of avian pathogenic Escherichia coli strain O1:K1:H7 shares strong similarities with human extraintestinal pathogenic E. coli genomes.</title>
        <authorList>
            <person name="Johnson T.J."/>
            <person name="Kariyawasam S."/>
            <person name="Wannemuehler Y."/>
            <person name="Mangiamele P."/>
            <person name="Johnson S.J."/>
            <person name="Doetkott C."/>
            <person name="Skyberg J.A."/>
            <person name="Lynne A.M."/>
            <person name="Johnson J.R."/>
            <person name="Nolan L.K."/>
        </authorList>
    </citation>
    <scope>NUCLEOTIDE SEQUENCE [LARGE SCALE GENOMIC DNA]</scope>
</reference>
<evidence type="ECO:0000255" key="1">
    <source>
        <dbReference type="HAMAP-Rule" id="MF_00362"/>
    </source>
</evidence>
<evidence type="ECO:0000305" key="2"/>
<sequence>MALNLQDKQAIVAEVSEVAKGALSAVVADSRGVTVDKMTELRKAGREAGVYMRVVRNTLLRRAVEGTPFECLKDAFVGPTLIAYSMEHPGAAARLFKEFAKANAKFEVKAAAFEGELIPASQIDRLATLPTYEEAIARLMATMKEASAGKLVRTLAAVRDAKEAA</sequence>
<protein>
    <recommendedName>
        <fullName evidence="1">Large ribosomal subunit protein uL10</fullName>
    </recommendedName>
    <alternativeName>
        <fullName evidence="2">50S ribosomal protein L10</fullName>
    </alternativeName>
</protein>
<feature type="chain" id="PRO_1000005492" description="Large ribosomal subunit protein uL10">
    <location>
        <begin position="1"/>
        <end position="165"/>
    </location>
</feature>
<feature type="modified residue" description="N6-acetyllysine" evidence="1">
    <location>
        <position position="37"/>
    </location>
</feature>
<feature type="modified residue" description="N6-acetyllysine" evidence="1">
    <location>
        <position position="105"/>
    </location>
</feature>
<name>RL10_ECOK1</name>
<gene>
    <name evidence="1" type="primary">rplJ</name>
    <name type="ordered locus">Ecok1_39530</name>
    <name type="ORF">APECO1_2488</name>
</gene>
<comment type="function">
    <text evidence="1">Forms part of the ribosomal stalk, playing a central role in the interaction of the ribosome with GTP-bound translation factors.</text>
</comment>
<comment type="subunit">
    <text evidence="1">Part of the ribosomal stalk of the 50S ribosomal subunit. The N-terminus interacts with L11 and the large rRNA to form the base of the stalk. The C-terminus forms an elongated spine to which L12 dimers bind in a sequential fashion forming a multimeric L10(L12)X complex.</text>
</comment>
<comment type="similarity">
    <text evidence="1">Belongs to the universal ribosomal protein uL10 family.</text>
</comment>
<accession>A1AIF7</accession>
<keyword id="KW-0007">Acetylation</keyword>
<keyword id="KW-1185">Reference proteome</keyword>
<keyword id="KW-0687">Ribonucleoprotein</keyword>
<keyword id="KW-0689">Ribosomal protein</keyword>
<keyword id="KW-0694">RNA-binding</keyword>
<keyword id="KW-0699">rRNA-binding</keyword>
<organism>
    <name type="scientific">Escherichia coli O1:K1 / APEC</name>
    <dbReference type="NCBI Taxonomy" id="405955"/>
    <lineage>
        <taxon>Bacteria</taxon>
        <taxon>Pseudomonadati</taxon>
        <taxon>Pseudomonadota</taxon>
        <taxon>Gammaproteobacteria</taxon>
        <taxon>Enterobacterales</taxon>
        <taxon>Enterobacteriaceae</taxon>
        <taxon>Escherichia</taxon>
    </lineage>
</organism>